<reference key="1">
    <citation type="journal article" date="2007" name="J. Bacteriol.">
        <title>Complete genome sequence of Haemophilus somnus (Histophilus somni) strain 129Pt and comparison to Haemophilus ducreyi 35000HP and Haemophilus influenzae Rd.</title>
        <authorList>
            <person name="Challacombe J.F."/>
            <person name="Duncan A.J."/>
            <person name="Brettin T.S."/>
            <person name="Bruce D."/>
            <person name="Chertkov O."/>
            <person name="Detter J.C."/>
            <person name="Han C.S."/>
            <person name="Misra M."/>
            <person name="Richardson P."/>
            <person name="Tapia R."/>
            <person name="Thayer N."/>
            <person name="Xie G."/>
            <person name="Inzana T.J."/>
        </authorList>
    </citation>
    <scope>NUCLEOTIDE SEQUENCE [LARGE SCALE GENOMIC DNA]</scope>
    <source>
        <strain>129Pt</strain>
    </source>
</reference>
<name>SSRP_HISS1</name>
<sequence length="160" mass="18072">MTKKKAKVASNTIALNKRARHDYFIEDEIEAGLSLQGWEVKSMRAGKASIGDSYIIFKHGEAYLFGATIQPLSVASTHIVCDPTRTRKLLLNQKELASLFGKANRDGFTIVALSLYWKGPWAKVKIGLAKGKKLHDKREDIKDREWKVTKDRIMKNAQRG</sequence>
<feature type="chain" id="PRO_1000002065" description="SsrA-binding protein">
    <location>
        <begin position="1"/>
        <end position="160"/>
    </location>
</feature>
<gene>
    <name evidence="1" type="primary">smpB</name>
    <name type="ordered locus">HS_0473</name>
</gene>
<proteinExistence type="inferred from homology"/>
<evidence type="ECO:0000255" key="1">
    <source>
        <dbReference type="HAMAP-Rule" id="MF_00023"/>
    </source>
</evidence>
<organism>
    <name type="scientific">Histophilus somni (strain 129Pt)</name>
    <name type="common">Haemophilus somnus</name>
    <dbReference type="NCBI Taxonomy" id="205914"/>
    <lineage>
        <taxon>Bacteria</taxon>
        <taxon>Pseudomonadati</taxon>
        <taxon>Pseudomonadota</taxon>
        <taxon>Gammaproteobacteria</taxon>
        <taxon>Pasteurellales</taxon>
        <taxon>Pasteurellaceae</taxon>
        <taxon>Histophilus</taxon>
    </lineage>
</organism>
<keyword id="KW-0963">Cytoplasm</keyword>
<keyword id="KW-0694">RNA-binding</keyword>
<dbReference type="EMBL" id="CP000436">
    <property type="protein sequence ID" value="ABI24750.1"/>
    <property type="molecule type" value="Genomic_DNA"/>
</dbReference>
<dbReference type="SMR" id="Q0I279"/>
<dbReference type="KEGG" id="hso:HS_0473"/>
<dbReference type="eggNOG" id="COG0691">
    <property type="taxonomic scope" value="Bacteria"/>
</dbReference>
<dbReference type="HOGENOM" id="CLU_108953_3_0_6"/>
<dbReference type="GO" id="GO:0005829">
    <property type="term" value="C:cytosol"/>
    <property type="evidence" value="ECO:0007669"/>
    <property type="project" value="TreeGrafter"/>
</dbReference>
<dbReference type="GO" id="GO:0003723">
    <property type="term" value="F:RNA binding"/>
    <property type="evidence" value="ECO:0007669"/>
    <property type="project" value="UniProtKB-UniRule"/>
</dbReference>
<dbReference type="GO" id="GO:0070929">
    <property type="term" value="P:trans-translation"/>
    <property type="evidence" value="ECO:0007669"/>
    <property type="project" value="UniProtKB-UniRule"/>
</dbReference>
<dbReference type="CDD" id="cd09294">
    <property type="entry name" value="SmpB"/>
    <property type="match status" value="1"/>
</dbReference>
<dbReference type="Gene3D" id="2.40.280.10">
    <property type="match status" value="1"/>
</dbReference>
<dbReference type="HAMAP" id="MF_00023">
    <property type="entry name" value="SmpB"/>
    <property type="match status" value="1"/>
</dbReference>
<dbReference type="InterPro" id="IPR023620">
    <property type="entry name" value="SmpB"/>
</dbReference>
<dbReference type="InterPro" id="IPR000037">
    <property type="entry name" value="SsrA-bd_prot"/>
</dbReference>
<dbReference type="InterPro" id="IPR020081">
    <property type="entry name" value="SsrA-bd_prot_CS"/>
</dbReference>
<dbReference type="NCBIfam" id="NF003843">
    <property type="entry name" value="PRK05422.1"/>
    <property type="match status" value="1"/>
</dbReference>
<dbReference type="NCBIfam" id="TIGR00086">
    <property type="entry name" value="smpB"/>
    <property type="match status" value="1"/>
</dbReference>
<dbReference type="PANTHER" id="PTHR30308:SF2">
    <property type="entry name" value="SSRA-BINDING PROTEIN"/>
    <property type="match status" value="1"/>
</dbReference>
<dbReference type="PANTHER" id="PTHR30308">
    <property type="entry name" value="TMRNA-BINDING COMPONENT OF TRANS-TRANSLATION TAGGING COMPLEX"/>
    <property type="match status" value="1"/>
</dbReference>
<dbReference type="Pfam" id="PF01668">
    <property type="entry name" value="SmpB"/>
    <property type="match status" value="1"/>
</dbReference>
<dbReference type="SUPFAM" id="SSF74982">
    <property type="entry name" value="Small protein B (SmpB)"/>
    <property type="match status" value="1"/>
</dbReference>
<dbReference type="PROSITE" id="PS01317">
    <property type="entry name" value="SSRP"/>
    <property type="match status" value="1"/>
</dbReference>
<protein>
    <recommendedName>
        <fullName evidence="1">SsrA-binding protein</fullName>
    </recommendedName>
    <alternativeName>
        <fullName evidence="1">Small protein B</fullName>
    </alternativeName>
</protein>
<accession>Q0I279</accession>
<comment type="function">
    <text evidence="1">Required for rescue of stalled ribosomes mediated by trans-translation. Binds to transfer-messenger RNA (tmRNA), required for stable association of tmRNA with ribosomes. tmRNA and SmpB together mimic tRNA shape, replacing the anticodon stem-loop with SmpB. tmRNA is encoded by the ssrA gene; the 2 termini fold to resemble tRNA(Ala) and it encodes a 'tag peptide', a short internal open reading frame. During trans-translation Ala-aminoacylated tmRNA acts like a tRNA, entering the A-site of stalled ribosomes, displacing the stalled mRNA. The ribosome then switches to translate the ORF on the tmRNA; the nascent peptide is terminated with the 'tag peptide' encoded by the tmRNA and targeted for degradation. The ribosome is freed to recommence translation, which seems to be the essential function of trans-translation.</text>
</comment>
<comment type="subcellular location">
    <subcellularLocation>
        <location evidence="1">Cytoplasm</location>
    </subcellularLocation>
    <text evidence="1">The tmRNA-SmpB complex associates with stalled 70S ribosomes.</text>
</comment>
<comment type="similarity">
    <text evidence="1">Belongs to the SmpB family.</text>
</comment>